<gene>
    <name type="primary">rpl5</name>
    <name type="ordered locus">OtCpg00380</name>
</gene>
<comment type="function">
    <text evidence="1">Binds 5S rRNA, forms part of the central protuberance of the 50S subunit.</text>
</comment>
<comment type="subunit">
    <text evidence="1">Part of the 50S ribosomal subunit; contacts the 5S rRNA.</text>
</comment>
<comment type="subcellular location">
    <subcellularLocation>
        <location>Plastid</location>
        <location>Chloroplast</location>
    </subcellularLocation>
</comment>
<comment type="similarity">
    <text evidence="2">Belongs to the universal ribosomal protein uL5 family.</text>
</comment>
<geneLocation type="chloroplast"/>
<proteinExistence type="inferred from homology"/>
<sequence>MIQRLQNLYLTKVQTTLTEQFQYKNTHEIPRLEKIVINRGVGSASQNTKLLESLADELTILAGQRPIVKRAKKAIAGFGVREDMPIGLTVTLRGERMYAFYDRLVNLALPRIRDFQGISPKNFDGHGNYTLGLTEQLMFPEVSYEQIDQVCGMDISIVTTASTDREGHGLLKELGMPFKAGSVN</sequence>
<protein>
    <recommendedName>
        <fullName evidence="2">Large ribosomal subunit protein uL5c</fullName>
    </recommendedName>
    <alternativeName>
        <fullName>50S ribosomal protein L5, chloroplastic</fullName>
    </alternativeName>
</protein>
<keyword id="KW-0150">Chloroplast</keyword>
<keyword id="KW-0934">Plastid</keyword>
<keyword id="KW-1185">Reference proteome</keyword>
<keyword id="KW-0687">Ribonucleoprotein</keyword>
<keyword id="KW-0689">Ribosomal protein</keyword>
<keyword id="KW-0694">RNA-binding</keyword>
<keyword id="KW-0699">rRNA-binding</keyword>
<evidence type="ECO:0000250" key="1"/>
<evidence type="ECO:0000305" key="2"/>
<name>RK5_OSTTA</name>
<feature type="chain" id="PRO_0000276578" description="Large ribosomal subunit protein uL5c">
    <location>
        <begin position="1"/>
        <end position="184"/>
    </location>
</feature>
<dbReference type="EMBL" id="CR954199">
    <property type="protein sequence ID" value="CAL36363.1"/>
    <property type="molecule type" value="Genomic_DNA"/>
</dbReference>
<dbReference type="RefSeq" id="YP_717241.1">
    <property type="nucleotide sequence ID" value="NC_008289.1"/>
</dbReference>
<dbReference type="SMR" id="Q0P3L4"/>
<dbReference type="FunCoup" id="Q0P3L4">
    <property type="interactions" value="645"/>
</dbReference>
<dbReference type="STRING" id="70448.Q0P3L4"/>
<dbReference type="GeneID" id="4238796"/>
<dbReference type="KEGG" id="ota:OstapCp38"/>
<dbReference type="eggNOG" id="KOG0398">
    <property type="taxonomic scope" value="Eukaryota"/>
</dbReference>
<dbReference type="InParanoid" id="Q0P3L4"/>
<dbReference type="Proteomes" id="UP000009170">
    <property type="component" value="Chloroplast"/>
</dbReference>
<dbReference type="GO" id="GO:0009507">
    <property type="term" value="C:chloroplast"/>
    <property type="evidence" value="ECO:0007669"/>
    <property type="project" value="UniProtKB-SubCell"/>
</dbReference>
<dbReference type="GO" id="GO:1990904">
    <property type="term" value="C:ribonucleoprotein complex"/>
    <property type="evidence" value="ECO:0007669"/>
    <property type="project" value="UniProtKB-KW"/>
</dbReference>
<dbReference type="GO" id="GO:0005840">
    <property type="term" value="C:ribosome"/>
    <property type="evidence" value="ECO:0007669"/>
    <property type="project" value="UniProtKB-KW"/>
</dbReference>
<dbReference type="GO" id="GO:0019843">
    <property type="term" value="F:rRNA binding"/>
    <property type="evidence" value="ECO:0007669"/>
    <property type="project" value="UniProtKB-UniRule"/>
</dbReference>
<dbReference type="GO" id="GO:0003735">
    <property type="term" value="F:structural constituent of ribosome"/>
    <property type="evidence" value="ECO:0007669"/>
    <property type="project" value="InterPro"/>
</dbReference>
<dbReference type="GO" id="GO:0006412">
    <property type="term" value="P:translation"/>
    <property type="evidence" value="ECO:0007669"/>
    <property type="project" value="UniProtKB-UniRule"/>
</dbReference>
<dbReference type="FunFam" id="3.30.1440.10:FF:000001">
    <property type="entry name" value="50S ribosomal protein L5"/>
    <property type="match status" value="1"/>
</dbReference>
<dbReference type="Gene3D" id="3.30.1440.10">
    <property type="match status" value="1"/>
</dbReference>
<dbReference type="HAMAP" id="MF_01333_B">
    <property type="entry name" value="Ribosomal_uL5_B"/>
    <property type="match status" value="1"/>
</dbReference>
<dbReference type="InterPro" id="IPR002132">
    <property type="entry name" value="Ribosomal_uL5"/>
</dbReference>
<dbReference type="InterPro" id="IPR020930">
    <property type="entry name" value="Ribosomal_uL5_bac-type"/>
</dbReference>
<dbReference type="InterPro" id="IPR031309">
    <property type="entry name" value="Ribosomal_uL5_C"/>
</dbReference>
<dbReference type="InterPro" id="IPR022803">
    <property type="entry name" value="Ribosomal_uL5_dom_sf"/>
</dbReference>
<dbReference type="InterPro" id="IPR031310">
    <property type="entry name" value="Ribosomal_uL5_N"/>
</dbReference>
<dbReference type="NCBIfam" id="NF000585">
    <property type="entry name" value="PRK00010.1"/>
    <property type="match status" value="1"/>
</dbReference>
<dbReference type="PANTHER" id="PTHR11994">
    <property type="entry name" value="60S RIBOSOMAL PROTEIN L11-RELATED"/>
    <property type="match status" value="1"/>
</dbReference>
<dbReference type="Pfam" id="PF00281">
    <property type="entry name" value="Ribosomal_L5"/>
    <property type="match status" value="1"/>
</dbReference>
<dbReference type="Pfam" id="PF00673">
    <property type="entry name" value="Ribosomal_L5_C"/>
    <property type="match status" value="1"/>
</dbReference>
<dbReference type="PIRSF" id="PIRSF002161">
    <property type="entry name" value="Ribosomal_L5"/>
    <property type="match status" value="1"/>
</dbReference>
<dbReference type="SUPFAM" id="SSF55282">
    <property type="entry name" value="RL5-like"/>
    <property type="match status" value="1"/>
</dbReference>
<organism>
    <name type="scientific">Ostreococcus tauri</name>
    <dbReference type="NCBI Taxonomy" id="70448"/>
    <lineage>
        <taxon>Eukaryota</taxon>
        <taxon>Viridiplantae</taxon>
        <taxon>Chlorophyta</taxon>
        <taxon>Mamiellophyceae</taxon>
        <taxon>Mamiellales</taxon>
        <taxon>Bathycoccaceae</taxon>
        <taxon>Ostreococcus</taxon>
    </lineage>
</organism>
<accession>Q0P3L4</accession>
<reference key="1">
    <citation type="journal article" date="2007" name="Mol. Biol. Evol.">
        <title>The complete chloroplast and mitochondrial DNA sequence of Ostreococcus tauri: organelle genomes of the smallest eukaryote are examples of compaction.</title>
        <authorList>
            <person name="Robbens S."/>
            <person name="Derelle E."/>
            <person name="Ferraz C."/>
            <person name="Wuyts J."/>
            <person name="Moreau H."/>
            <person name="Van de Peer Y."/>
        </authorList>
    </citation>
    <scope>NUCLEOTIDE SEQUENCE [LARGE SCALE GENOMIC DNA]</scope>
    <source>
        <strain>OTTH0595</strain>
    </source>
</reference>